<sequence length="257" mass="29305">MISRKSVITFGMVAIPIGMYTTTTDNDIRFNQLHKEDNSRIRYKKTCAHCGKEVKTEDIVKGYEYDDDKYVVITDEEIEKIKTEKEKSIQILHFAQLNQISPVYYEKTYQAVPETGGEKAFELLRSALMAEQKIAIGKTVMGTKDTLMAIIPREDGILISTMFYADDIKAIQKQYTKPEVNEQEFNMAKLLINSMDTPFDPSKYKDEYQERLRSLIETKISGKEIVAAEPESAGKVIDLMEALKASVEKAQKDKETA</sequence>
<gene>
    <name evidence="1" type="primary">ku</name>
    <name type="ordered locus">Cphy_1728</name>
</gene>
<comment type="function">
    <text evidence="1">With LigD forms a non-homologous end joining (NHEJ) DNA repair enzyme, which repairs dsDNA breaks with reduced fidelity. Binds linear dsDNA with 5'- and 3'- overhangs but not closed circular dsDNA nor ssDNA. Recruits and stimulates the ligase activity of LigD.</text>
</comment>
<comment type="subunit">
    <text evidence="1">Homodimer. Interacts with LigD.</text>
</comment>
<comment type="similarity">
    <text evidence="1">Belongs to the prokaryotic Ku family.</text>
</comment>
<reference key="1">
    <citation type="submission" date="2007-11" db="EMBL/GenBank/DDBJ databases">
        <title>Complete genome sequence of Clostridium phytofermentans ISDg.</title>
        <authorList>
            <person name="Leschine S.B."/>
            <person name="Warnick T.A."/>
            <person name="Blanchard J.L."/>
            <person name="Schnell D.J."/>
            <person name="Petit E.L."/>
            <person name="LaTouf W.G."/>
            <person name="Copeland A."/>
            <person name="Lucas S."/>
            <person name="Lapidus A."/>
            <person name="Barry K."/>
            <person name="Glavina del Rio T."/>
            <person name="Dalin E."/>
            <person name="Tice H."/>
            <person name="Pitluck S."/>
            <person name="Kiss H."/>
            <person name="Brettin T."/>
            <person name="Bruce D."/>
            <person name="Detter J.C."/>
            <person name="Han C."/>
            <person name="Kuske C."/>
            <person name="Schmutz J."/>
            <person name="Larimer F."/>
            <person name="Land M."/>
            <person name="Hauser L."/>
            <person name="Kyrpides N."/>
            <person name="Kim E.A."/>
            <person name="Richardson P."/>
        </authorList>
    </citation>
    <scope>NUCLEOTIDE SEQUENCE [LARGE SCALE GENOMIC DNA]</scope>
    <source>
        <strain>ATCC 700394 / DSM 18823 / ISDg</strain>
    </source>
</reference>
<feature type="chain" id="PRO_0000389180" description="Non-homologous end joining protein Ku">
    <location>
        <begin position="1"/>
        <end position="257"/>
    </location>
</feature>
<feature type="domain" description="Ku" evidence="1">
    <location>
        <begin position="9"/>
        <end position="184"/>
    </location>
</feature>
<evidence type="ECO:0000255" key="1">
    <source>
        <dbReference type="HAMAP-Rule" id="MF_01875"/>
    </source>
</evidence>
<accession>A9KS68</accession>
<keyword id="KW-0227">DNA damage</keyword>
<keyword id="KW-0233">DNA recombination</keyword>
<keyword id="KW-0234">DNA repair</keyword>
<keyword id="KW-0238">DNA-binding</keyword>
<keyword id="KW-1185">Reference proteome</keyword>
<organism>
    <name type="scientific">Lachnoclostridium phytofermentans (strain ATCC 700394 / DSM 18823 / ISDg)</name>
    <name type="common">Clostridium phytofermentans</name>
    <dbReference type="NCBI Taxonomy" id="357809"/>
    <lineage>
        <taxon>Bacteria</taxon>
        <taxon>Bacillati</taxon>
        <taxon>Bacillota</taxon>
        <taxon>Clostridia</taxon>
        <taxon>Lachnospirales</taxon>
        <taxon>Lachnospiraceae</taxon>
    </lineage>
</organism>
<proteinExistence type="inferred from homology"/>
<protein>
    <recommendedName>
        <fullName evidence="1">Non-homologous end joining protein Ku</fullName>
    </recommendedName>
</protein>
<name>KU_LACP7</name>
<dbReference type="EMBL" id="CP000885">
    <property type="protein sequence ID" value="ABX42100.1"/>
    <property type="molecule type" value="Genomic_DNA"/>
</dbReference>
<dbReference type="RefSeq" id="WP_012199754.1">
    <property type="nucleotide sequence ID" value="NC_010001.1"/>
</dbReference>
<dbReference type="SMR" id="A9KS68"/>
<dbReference type="STRING" id="357809.Cphy_1728"/>
<dbReference type="KEGG" id="cpy:Cphy_1728"/>
<dbReference type="eggNOG" id="COG1273">
    <property type="taxonomic scope" value="Bacteria"/>
</dbReference>
<dbReference type="HOGENOM" id="CLU_048975_1_0_9"/>
<dbReference type="OrthoDB" id="9795084at2"/>
<dbReference type="Proteomes" id="UP000000370">
    <property type="component" value="Chromosome"/>
</dbReference>
<dbReference type="GO" id="GO:0003690">
    <property type="term" value="F:double-stranded DNA binding"/>
    <property type="evidence" value="ECO:0007669"/>
    <property type="project" value="UniProtKB-UniRule"/>
</dbReference>
<dbReference type="GO" id="GO:0006310">
    <property type="term" value="P:DNA recombination"/>
    <property type="evidence" value="ECO:0007669"/>
    <property type="project" value="UniProtKB-KW"/>
</dbReference>
<dbReference type="GO" id="GO:0006303">
    <property type="term" value="P:double-strand break repair via nonhomologous end joining"/>
    <property type="evidence" value="ECO:0007669"/>
    <property type="project" value="UniProtKB-UniRule"/>
</dbReference>
<dbReference type="CDD" id="cd00789">
    <property type="entry name" value="KU_like"/>
    <property type="match status" value="1"/>
</dbReference>
<dbReference type="Gene3D" id="2.40.290.10">
    <property type="match status" value="1"/>
</dbReference>
<dbReference type="HAMAP" id="MF_01875">
    <property type="entry name" value="Prokaryotic_Ku"/>
    <property type="match status" value="1"/>
</dbReference>
<dbReference type="InterPro" id="IPR006164">
    <property type="entry name" value="Ku70/Ku80_beta-barrel_dom"/>
</dbReference>
<dbReference type="InterPro" id="IPR009187">
    <property type="entry name" value="Prok_Ku"/>
</dbReference>
<dbReference type="InterPro" id="IPR016194">
    <property type="entry name" value="SPOC-like_C_dom_sf"/>
</dbReference>
<dbReference type="NCBIfam" id="TIGR02772">
    <property type="entry name" value="Ku_bact"/>
    <property type="match status" value="1"/>
</dbReference>
<dbReference type="PANTHER" id="PTHR41251">
    <property type="entry name" value="NON-HOMOLOGOUS END JOINING PROTEIN KU"/>
    <property type="match status" value="1"/>
</dbReference>
<dbReference type="PANTHER" id="PTHR41251:SF1">
    <property type="entry name" value="NON-HOMOLOGOUS END JOINING PROTEIN KU"/>
    <property type="match status" value="1"/>
</dbReference>
<dbReference type="Pfam" id="PF02735">
    <property type="entry name" value="Ku"/>
    <property type="match status" value="1"/>
</dbReference>
<dbReference type="PIRSF" id="PIRSF006493">
    <property type="entry name" value="Prok_Ku"/>
    <property type="match status" value="1"/>
</dbReference>
<dbReference type="SMART" id="SM00559">
    <property type="entry name" value="Ku78"/>
    <property type="match status" value="1"/>
</dbReference>
<dbReference type="SUPFAM" id="SSF100939">
    <property type="entry name" value="SPOC domain-like"/>
    <property type="match status" value="1"/>
</dbReference>